<gene>
    <name evidence="1" type="primary">ispD</name>
    <name type="ordered locus">Pro_0453</name>
</gene>
<comment type="function">
    <text evidence="1">Catalyzes the formation of 4-diphosphocytidyl-2-C-methyl-D-erythritol from CTP and 2-C-methyl-D-erythritol 4-phosphate (MEP).</text>
</comment>
<comment type="catalytic activity">
    <reaction evidence="1">
        <text>2-C-methyl-D-erythritol 4-phosphate + CTP + H(+) = 4-CDP-2-C-methyl-D-erythritol + diphosphate</text>
        <dbReference type="Rhea" id="RHEA:13429"/>
        <dbReference type="ChEBI" id="CHEBI:15378"/>
        <dbReference type="ChEBI" id="CHEBI:33019"/>
        <dbReference type="ChEBI" id="CHEBI:37563"/>
        <dbReference type="ChEBI" id="CHEBI:57823"/>
        <dbReference type="ChEBI" id="CHEBI:58262"/>
        <dbReference type="EC" id="2.7.7.60"/>
    </reaction>
</comment>
<comment type="pathway">
    <text evidence="1">Isoprenoid biosynthesis; isopentenyl diphosphate biosynthesis via DXP pathway; isopentenyl diphosphate from 1-deoxy-D-xylulose 5-phosphate: step 2/6.</text>
</comment>
<comment type="similarity">
    <text evidence="1">Belongs to the IspD/TarI cytidylyltransferase family. IspD subfamily.</text>
</comment>
<keyword id="KW-0414">Isoprene biosynthesis</keyword>
<keyword id="KW-0548">Nucleotidyltransferase</keyword>
<keyword id="KW-1185">Reference proteome</keyword>
<keyword id="KW-0808">Transferase</keyword>
<name>ISPD_PROMA</name>
<protein>
    <recommendedName>
        <fullName evidence="1">2-C-methyl-D-erythritol 4-phosphate cytidylyltransferase</fullName>
        <ecNumber evidence="1">2.7.7.60</ecNumber>
    </recommendedName>
    <alternativeName>
        <fullName evidence="1">4-diphosphocytidyl-2C-methyl-D-erythritol synthase</fullName>
    </alternativeName>
    <alternativeName>
        <fullName evidence="1">MEP cytidylyltransferase</fullName>
        <shortName evidence="1">MCT</shortName>
    </alternativeName>
</protein>
<feature type="chain" id="PRO_0000075601" description="2-C-methyl-D-erythritol 4-phosphate cytidylyltransferase">
    <location>
        <begin position="1"/>
        <end position="226"/>
    </location>
</feature>
<feature type="site" description="Transition state stabilizer" evidence="1">
    <location>
        <position position="13"/>
    </location>
</feature>
<feature type="site" description="Transition state stabilizer" evidence="1">
    <location>
        <position position="20"/>
    </location>
</feature>
<feature type="site" description="Positions MEP for the nucleophilic attack" evidence="1">
    <location>
        <position position="150"/>
    </location>
</feature>
<feature type="site" description="Positions MEP for the nucleophilic attack" evidence="1">
    <location>
        <position position="206"/>
    </location>
</feature>
<dbReference type="EC" id="2.7.7.60" evidence="1"/>
<dbReference type="EMBL" id="AE017126">
    <property type="protein sequence ID" value="AAP99499.1"/>
    <property type="molecule type" value="Genomic_DNA"/>
</dbReference>
<dbReference type="RefSeq" id="NP_874847.1">
    <property type="nucleotide sequence ID" value="NC_005042.1"/>
</dbReference>
<dbReference type="RefSeq" id="WP_011124608.1">
    <property type="nucleotide sequence ID" value="NC_005042.1"/>
</dbReference>
<dbReference type="SMR" id="Q7VDC7"/>
<dbReference type="STRING" id="167539.Pro_0453"/>
<dbReference type="EnsemblBacteria" id="AAP99499">
    <property type="protein sequence ID" value="AAP99499"/>
    <property type="gene ID" value="Pro_0453"/>
</dbReference>
<dbReference type="KEGG" id="pma:Pro_0453"/>
<dbReference type="PATRIC" id="fig|167539.5.peg.464"/>
<dbReference type="eggNOG" id="COG1211">
    <property type="taxonomic scope" value="Bacteria"/>
</dbReference>
<dbReference type="HOGENOM" id="CLU_061281_1_0_3"/>
<dbReference type="OrthoDB" id="9806837at2"/>
<dbReference type="UniPathway" id="UPA00056">
    <property type="reaction ID" value="UER00093"/>
</dbReference>
<dbReference type="Proteomes" id="UP000001420">
    <property type="component" value="Chromosome"/>
</dbReference>
<dbReference type="GO" id="GO:0050518">
    <property type="term" value="F:2-C-methyl-D-erythritol 4-phosphate cytidylyltransferase activity"/>
    <property type="evidence" value="ECO:0007669"/>
    <property type="project" value="UniProtKB-UniRule"/>
</dbReference>
<dbReference type="GO" id="GO:0019288">
    <property type="term" value="P:isopentenyl diphosphate biosynthetic process, methylerythritol 4-phosphate pathway"/>
    <property type="evidence" value="ECO:0007669"/>
    <property type="project" value="UniProtKB-UniRule"/>
</dbReference>
<dbReference type="CDD" id="cd02516">
    <property type="entry name" value="CDP-ME_synthetase"/>
    <property type="match status" value="1"/>
</dbReference>
<dbReference type="FunFam" id="3.90.550.10:FF:000003">
    <property type="entry name" value="2-C-methyl-D-erythritol 4-phosphate cytidylyltransferase"/>
    <property type="match status" value="1"/>
</dbReference>
<dbReference type="Gene3D" id="3.90.550.10">
    <property type="entry name" value="Spore Coat Polysaccharide Biosynthesis Protein SpsA, Chain A"/>
    <property type="match status" value="1"/>
</dbReference>
<dbReference type="HAMAP" id="MF_00108">
    <property type="entry name" value="IspD"/>
    <property type="match status" value="1"/>
</dbReference>
<dbReference type="InterPro" id="IPR001228">
    <property type="entry name" value="IspD"/>
</dbReference>
<dbReference type="InterPro" id="IPR034683">
    <property type="entry name" value="IspD/TarI"/>
</dbReference>
<dbReference type="InterPro" id="IPR050088">
    <property type="entry name" value="IspD/TarI_cytidylyltransf_bact"/>
</dbReference>
<dbReference type="InterPro" id="IPR018294">
    <property type="entry name" value="ISPD_synthase_CS"/>
</dbReference>
<dbReference type="InterPro" id="IPR029044">
    <property type="entry name" value="Nucleotide-diphossugar_trans"/>
</dbReference>
<dbReference type="NCBIfam" id="TIGR00453">
    <property type="entry name" value="ispD"/>
    <property type="match status" value="1"/>
</dbReference>
<dbReference type="PANTHER" id="PTHR32125">
    <property type="entry name" value="2-C-METHYL-D-ERYTHRITOL 4-PHOSPHATE CYTIDYLYLTRANSFERASE, CHLOROPLASTIC"/>
    <property type="match status" value="1"/>
</dbReference>
<dbReference type="PANTHER" id="PTHR32125:SF4">
    <property type="entry name" value="2-C-METHYL-D-ERYTHRITOL 4-PHOSPHATE CYTIDYLYLTRANSFERASE, CHLOROPLASTIC"/>
    <property type="match status" value="1"/>
</dbReference>
<dbReference type="Pfam" id="PF01128">
    <property type="entry name" value="IspD"/>
    <property type="match status" value="1"/>
</dbReference>
<dbReference type="SUPFAM" id="SSF53448">
    <property type="entry name" value="Nucleotide-diphospho-sugar transferases"/>
    <property type="match status" value="1"/>
</dbReference>
<dbReference type="PROSITE" id="PS01295">
    <property type="entry name" value="ISPD"/>
    <property type="match status" value="1"/>
</dbReference>
<reference key="1">
    <citation type="journal article" date="2003" name="Proc. Natl. Acad. Sci. U.S.A.">
        <title>Genome sequence of the cyanobacterium Prochlorococcus marinus SS120, a nearly minimal oxyphototrophic genome.</title>
        <authorList>
            <person name="Dufresne A."/>
            <person name="Salanoubat M."/>
            <person name="Partensky F."/>
            <person name="Artiguenave F."/>
            <person name="Axmann I.M."/>
            <person name="Barbe V."/>
            <person name="Duprat S."/>
            <person name="Galperin M.Y."/>
            <person name="Koonin E.V."/>
            <person name="Le Gall F."/>
            <person name="Makarova K.S."/>
            <person name="Ostrowski M."/>
            <person name="Oztas S."/>
            <person name="Robert C."/>
            <person name="Rogozin I.B."/>
            <person name="Scanlan D.J."/>
            <person name="Tandeau de Marsac N."/>
            <person name="Weissenbach J."/>
            <person name="Wincker P."/>
            <person name="Wolf Y.I."/>
            <person name="Hess W.R."/>
        </authorList>
    </citation>
    <scope>NUCLEOTIDE SEQUENCE [LARGE SCALE GENOMIC DNA]</scope>
    <source>
        <strain>SARG / CCMP1375 / SS120</strain>
    </source>
</reference>
<sequence length="226" mass="24528">MHLLIAAAGSGKRMGANCNKLLLKVAGRSVLAWTLDAVKRSNSISWIGIVGQPSDKEAIVSIFDECALQAKWINGGDSRQESVQLGLEGLPLDAKHVLIHDGARCLVEPELFDKCSEMLRQGVSVIAATPVIDTIKKVSLDGFINKTFNRAELWAAQTPQGFNVEQLRQGHKKALVNNWTVTDDASLFEKLGWPVKILESSPSNIKVTTPFDLLIADALLSSRGAD</sequence>
<evidence type="ECO:0000255" key="1">
    <source>
        <dbReference type="HAMAP-Rule" id="MF_00108"/>
    </source>
</evidence>
<accession>Q7VDC7</accession>
<organism>
    <name type="scientific">Prochlorococcus marinus (strain SARG / CCMP1375 / SS120)</name>
    <dbReference type="NCBI Taxonomy" id="167539"/>
    <lineage>
        <taxon>Bacteria</taxon>
        <taxon>Bacillati</taxon>
        <taxon>Cyanobacteriota</taxon>
        <taxon>Cyanophyceae</taxon>
        <taxon>Synechococcales</taxon>
        <taxon>Prochlorococcaceae</taxon>
        <taxon>Prochlorococcus</taxon>
    </lineage>
</organism>
<proteinExistence type="inferred from homology"/>